<accession>Q2UFN8</accession>
<accession>Q5KU02</accession>
<protein>
    <recommendedName>
        <fullName>Probable E3 ubiquitin ligase complex SCF subunit sconB</fullName>
    </recommendedName>
    <alternativeName>
        <fullName>Sulfur controller B</fullName>
    </alternativeName>
    <alternativeName>
        <fullName>Sulfur metabolite repression control protein B</fullName>
    </alternativeName>
</protein>
<evidence type="ECO:0000250" key="1"/>
<evidence type="ECO:0000255" key="2">
    <source>
        <dbReference type="PROSITE-ProRule" id="PRU00080"/>
    </source>
</evidence>
<evidence type="ECO:0000256" key="3">
    <source>
        <dbReference type="SAM" id="MobiDB-lite"/>
    </source>
</evidence>
<evidence type="ECO:0000305" key="4"/>
<comment type="function">
    <text evidence="1">Component of the SCF(sconB) E3 ubiquitin ligase complex involved in the regulation of sulfur metabolite repression, probably by mediating the inactivation or degradation of the metR transcription factor.</text>
</comment>
<comment type="pathway">
    <text>Protein modification; protein ubiquitination.</text>
</comment>
<comment type="subunit">
    <text evidence="1">Component of the SCF(sconB) E3 ubiquitin ligase complex.</text>
</comment>
<comment type="similarity">
    <text evidence="4">Belongs to the WD repeat MET30/SCONB/SCON-2 family.</text>
</comment>
<comment type="sequence caution" evidence="4">
    <conflict type="erroneous initiation">
        <sequence resource="EMBL-CDS" id="BAD83608"/>
    </conflict>
    <text>Truncated N-terminus.</text>
</comment>
<proteinExistence type="inferred from homology"/>
<dbReference type="EMBL" id="AB070844">
    <property type="protein sequence ID" value="BAD83608.1"/>
    <property type="status" value="ALT_INIT"/>
    <property type="molecule type" value="Genomic_DNA"/>
</dbReference>
<dbReference type="EMBL" id="BA000051">
    <property type="protein sequence ID" value="BAE59627.1"/>
    <property type="molecule type" value="Genomic_DNA"/>
</dbReference>
<dbReference type="RefSeq" id="XP_001821629.1">
    <property type="nucleotide sequence ID" value="XM_001821577.1"/>
</dbReference>
<dbReference type="SMR" id="Q2UFN8"/>
<dbReference type="STRING" id="510516.Q2UFN8"/>
<dbReference type="EnsemblFungi" id="BAE59627">
    <property type="protein sequence ID" value="BAE59627"/>
    <property type="gene ID" value="AO090026000133"/>
</dbReference>
<dbReference type="GeneID" id="5993657"/>
<dbReference type="KEGG" id="aor:AO090026000133"/>
<dbReference type="VEuPathDB" id="FungiDB:AO090026000133"/>
<dbReference type="HOGENOM" id="CLU_000288_103_1_1"/>
<dbReference type="OMA" id="GIAHVWS"/>
<dbReference type="OrthoDB" id="87306at5052"/>
<dbReference type="UniPathway" id="UPA00143"/>
<dbReference type="Proteomes" id="UP000006564">
    <property type="component" value="Chromosome 3"/>
</dbReference>
<dbReference type="GO" id="GO:0016567">
    <property type="term" value="P:protein ubiquitination"/>
    <property type="evidence" value="ECO:0007669"/>
    <property type="project" value="UniProtKB-UniPathway"/>
</dbReference>
<dbReference type="CDD" id="cd22147">
    <property type="entry name" value="F-box_SpPof1-like"/>
    <property type="match status" value="1"/>
</dbReference>
<dbReference type="CDD" id="cd00200">
    <property type="entry name" value="WD40"/>
    <property type="match status" value="1"/>
</dbReference>
<dbReference type="FunFam" id="1.20.1280.50:FF:000016">
    <property type="entry name" value="E3 ubiquitin ligase complex SCF subunit sconB"/>
    <property type="match status" value="1"/>
</dbReference>
<dbReference type="FunFam" id="2.130.10.10:FF:000770">
    <property type="entry name" value="E3 ubiquitin ligase complex SCF subunit sconB"/>
    <property type="match status" value="1"/>
</dbReference>
<dbReference type="FunFam" id="2.130.10.10:FF:000890">
    <property type="entry name" value="Probable E3 ubiquitin ligase complex SCF subunit sconB"/>
    <property type="match status" value="1"/>
</dbReference>
<dbReference type="Gene3D" id="1.20.1280.50">
    <property type="match status" value="1"/>
</dbReference>
<dbReference type="Gene3D" id="2.130.10.10">
    <property type="entry name" value="YVTN repeat-like/Quinoprotein amine dehydrogenase"/>
    <property type="match status" value="3"/>
</dbReference>
<dbReference type="InterPro" id="IPR036047">
    <property type="entry name" value="F-box-like_dom_sf"/>
</dbReference>
<dbReference type="InterPro" id="IPR001810">
    <property type="entry name" value="F-box_dom"/>
</dbReference>
<dbReference type="InterPro" id="IPR020472">
    <property type="entry name" value="G-protein_beta_WD-40_rep"/>
</dbReference>
<dbReference type="InterPro" id="IPR051075">
    <property type="entry name" value="SCF_subunit_WD-repeat"/>
</dbReference>
<dbReference type="InterPro" id="IPR015943">
    <property type="entry name" value="WD40/YVTN_repeat-like_dom_sf"/>
</dbReference>
<dbReference type="InterPro" id="IPR019775">
    <property type="entry name" value="WD40_repeat_CS"/>
</dbReference>
<dbReference type="InterPro" id="IPR036322">
    <property type="entry name" value="WD40_repeat_dom_sf"/>
</dbReference>
<dbReference type="InterPro" id="IPR001680">
    <property type="entry name" value="WD40_rpt"/>
</dbReference>
<dbReference type="PANTHER" id="PTHR19872">
    <property type="entry name" value="UBIQUITIN LIGASE SPECIFICITY FACTOR/HREP PROTEIN"/>
    <property type="match status" value="1"/>
</dbReference>
<dbReference type="PANTHER" id="PTHR19872:SF9">
    <property type="entry name" value="UBIQUITIN-BINDING SDF UBIQUITIN LIGASE COMPLEX SUBUNIT"/>
    <property type="match status" value="1"/>
</dbReference>
<dbReference type="Pfam" id="PF12937">
    <property type="entry name" value="F-box-like"/>
    <property type="match status" value="1"/>
</dbReference>
<dbReference type="Pfam" id="PF00400">
    <property type="entry name" value="WD40"/>
    <property type="match status" value="6"/>
</dbReference>
<dbReference type="PRINTS" id="PR00320">
    <property type="entry name" value="GPROTEINBRPT"/>
</dbReference>
<dbReference type="SMART" id="SM00256">
    <property type="entry name" value="FBOX"/>
    <property type="match status" value="1"/>
</dbReference>
<dbReference type="SMART" id="SM00320">
    <property type="entry name" value="WD40"/>
    <property type="match status" value="7"/>
</dbReference>
<dbReference type="SUPFAM" id="SSF81383">
    <property type="entry name" value="F-box domain"/>
    <property type="match status" value="1"/>
</dbReference>
<dbReference type="SUPFAM" id="SSF50978">
    <property type="entry name" value="WD40 repeat-like"/>
    <property type="match status" value="1"/>
</dbReference>
<dbReference type="PROSITE" id="PS50181">
    <property type="entry name" value="FBOX"/>
    <property type="match status" value="1"/>
</dbReference>
<dbReference type="PROSITE" id="PS00678">
    <property type="entry name" value="WD_REPEATS_1"/>
    <property type="match status" value="4"/>
</dbReference>
<dbReference type="PROSITE" id="PS50082">
    <property type="entry name" value="WD_REPEATS_2"/>
    <property type="match status" value="7"/>
</dbReference>
<dbReference type="PROSITE" id="PS50294">
    <property type="entry name" value="WD_REPEATS_REGION"/>
    <property type="match status" value="1"/>
</dbReference>
<feature type="chain" id="PRO_0000397250" description="Probable E3 ubiquitin ligase complex SCF subunit sconB">
    <location>
        <begin position="1"/>
        <end position="705"/>
    </location>
</feature>
<feature type="domain" description="F-box" evidence="2">
    <location>
        <begin position="202"/>
        <end position="248"/>
    </location>
</feature>
<feature type="repeat" description="WD 1">
    <location>
        <begin position="376"/>
        <end position="413"/>
    </location>
</feature>
<feature type="repeat" description="WD 2">
    <location>
        <begin position="416"/>
        <end position="455"/>
    </location>
</feature>
<feature type="repeat" description="WD 3">
    <location>
        <begin position="457"/>
        <end position="493"/>
    </location>
</feature>
<feature type="repeat" description="WD 4">
    <location>
        <begin position="495"/>
        <end position="536"/>
    </location>
</feature>
<feature type="repeat" description="WD 5">
    <location>
        <begin position="588"/>
        <end position="631"/>
    </location>
</feature>
<feature type="repeat" description="WD 6">
    <location>
        <begin position="634"/>
        <end position="671"/>
    </location>
</feature>
<feature type="repeat" description="WD 7">
    <location>
        <begin position="674"/>
        <end position="705"/>
    </location>
</feature>
<feature type="region of interest" description="Disordered" evidence="3">
    <location>
        <begin position="1"/>
        <end position="42"/>
    </location>
</feature>
<feature type="region of interest" description="Disordered" evidence="3">
    <location>
        <begin position="55"/>
        <end position="80"/>
    </location>
</feature>
<feature type="compositionally biased region" description="Basic and acidic residues" evidence="3">
    <location>
        <begin position="1"/>
        <end position="12"/>
    </location>
</feature>
<feature type="compositionally biased region" description="Low complexity" evidence="3">
    <location>
        <begin position="33"/>
        <end position="42"/>
    </location>
</feature>
<feature type="sequence conflict" description="In Ref. 1; BAD83608." evidence="4" ref="1">
    <original>S</original>
    <variation>F</variation>
    <location>
        <position position="3"/>
    </location>
</feature>
<feature type="sequence conflict" description="In Ref. 1; BAD83608." evidence="4" ref="1">
    <original>S</original>
    <variation>F</variation>
    <location>
        <position position="44"/>
    </location>
</feature>
<reference key="1">
    <citation type="submission" date="2001-08" db="EMBL/GenBank/DDBJ databases">
        <title>Analysis of sulfur regulatory netwok in Aspergillus oryzae.</title>
        <authorList>
            <person name="Sano M."/>
            <person name="Takase K."/>
            <person name="Yamamoto M."/>
            <person name="Machida M."/>
        </authorList>
    </citation>
    <scope>NUCLEOTIDE SEQUENCE [GENOMIC DNA]</scope>
</reference>
<reference key="2">
    <citation type="journal article" date="2005" name="Nature">
        <title>Genome sequencing and analysis of Aspergillus oryzae.</title>
        <authorList>
            <person name="Machida M."/>
            <person name="Asai K."/>
            <person name="Sano M."/>
            <person name="Tanaka T."/>
            <person name="Kumagai T."/>
            <person name="Terai G."/>
            <person name="Kusumoto K."/>
            <person name="Arima T."/>
            <person name="Akita O."/>
            <person name="Kashiwagi Y."/>
            <person name="Abe K."/>
            <person name="Gomi K."/>
            <person name="Horiuchi H."/>
            <person name="Kitamoto K."/>
            <person name="Kobayashi T."/>
            <person name="Takeuchi M."/>
            <person name="Denning D.W."/>
            <person name="Galagan J.E."/>
            <person name="Nierman W.C."/>
            <person name="Yu J."/>
            <person name="Archer D.B."/>
            <person name="Bennett J.W."/>
            <person name="Bhatnagar D."/>
            <person name="Cleveland T.E."/>
            <person name="Fedorova N.D."/>
            <person name="Gotoh O."/>
            <person name="Horikawa H."/>
            <person name="Hosoyama A."/>
            <person name="Ichinomiya M."/>
            <person name="Igarashi R."/>
            <person name="Iwashita K."/>
            <person name="Juvvadi P.R."/>
            <person name="Kato M."/>
            <person name="Kato Y."/>
            <person name="Kin T."/>
            <person name="Kokubun A."/>
            <person name="Maeda H."/>
            <person name="Maeyama N."/>
            <person name="Maruyama J."/>
            <person name="Nagasaki H."/>
            <person name="Nakajima T."/>
            <person name="Oda K."/>
            <person name="Okada K."/>
            <person name="Paulsen I."/>
            <person name="Sakamoto K."/>
            <person name="Sawano T."/>
            <person name="Takahashi M."/>
            <person name="Takase K."/>
            <person name="Terabayashi Y."/>
            <person name="Wortman J.R."/>
            <person name="Yamada O."/>
            <person name="Yamagata Y."/>
            <person name="Anazawa H."/>
            <person name="Hata Y."/>
            <person name="Koide Y."/>
            <person name="Komori T."/>
            <person name="Koyama Y."/>
            <person name="Minetoki T."/>
            <person name="Suharnan S."/>
            <person name="Tanaka A."/>
            <person name="Isono K."/>
            <person name="Kuhara S."/>
            <person name="Ogasawara N."/>
            <person name="Kikuchi H."/>
        </authorList>
    </citation>
    <scope>NUCLEOTIDE SEQUENCE [LARGE SCALE GENOMIC DNA]</scope>
    <source>
        <strain>ATCC 42149 / RIB 40</strain>
    </source>
</reference>
<sequence length="705" mass="79353">MQSDDRSVREGSDSSQTFLMKMAQPTGELTHPSQQQQLQLQQQSFQSIFGGASDTTEEIDTETDSNHRRPHSFGAAATTPAKLANKNVAPFLVKHIPEQYGPLGSRRTDKLEDLSSPNSKFCYRHRPDLKCRRQADEPSMDKLQRELETLPPSDQQGIAHVWSLFSAAPAKHRKLILQGIMAQCCFPQLSFVSATVRDLIRIDFLTALPPEISFKILCYLDTTSLCKAAQVSSRWRALADDDVVWHRMCEQHIHRKCKKCGWGLPLLERKRLRESKREIELRATTWDVSGPAQNAGGAECSAPHADDVITQKRKADSSDDETAIVKRHCSSLDARPEPDEDYYTTRYRPWKEVYKDRFKVGTNWKYGRCSTKVFKGHTNGVMCLQFEDNILATGSYDATIKIWDTETGEELRTLRGHQSGIRCLQFDDTKLISGSMDRSLKVWNWRTGECISTYTGHRGGVIGLHFDATILASASVDKTVKIWNFEDKSTFLLRGHTDWVNAVRVDTTSRTVFSASDDCTVRLWDLDTKACLRTFHGHVGQVQQVVPLPREFEFEDHDAECDNDNMSTTSGDTESNSLQATLGLESNATETSVFGPSFDNGRPAPPRYIVTSALDSTIRLWETTTGRCLRTFFGHLEGVWALGADTLRIVSGAEDRMVKIWDPRTGKCERTFTGHSGPVTCIGLGDSRFATGSEDCEVRMYSFRN</sequence>
<keyword id="KW-1185">Reference proteome</keyword>
<keyword id="KW-0677">Repeat</keyword>
<keyword id="KW-0804">Transcription</keyword>
<keyword id="KW-0805">Transcription regulation</keyword>
<keyword id="KW-0833">Ubl conjugation pathway</keyword>
<keyword id="KW-0853">WD repeat</keyword>
<organism>
    <name type="scientific">Aspergillus oryzae (strain ATCC 42149 / RIB 40)</name>
    <name type="common">Yellow koji mold</name>
    <dbReference type="NCBI Taxonomy" id="510516"/>
    <lineage>
        <taxon>Eukaryota</taxon>
        <taxon>Fungi</taxon>
        <taxon>Dikarya</taxon>
        <taxon>Ascomycota</taxon>
        <taxon>Pezizomycotina</taxon>
        <taxon>Eurotiomycetes</taxon>
        <taxon>Eurotiomycetidae</taxon>
        <taxon>Eurotiales</taxon>
        <taxon>Aspergillaceae</taxon>
        <taxon>Aspergillus</taxon>
        <taxon>Aspergillus subgen. Circumdati</taxon>
    </lineage>
</organism>
<gene>
    <name type="primary">sconB</name>
    <name type="ORF">AO090026000133</name>
</gene>
<name>SCONB_ASPOR</name>